<keyword id="KW-0249">Electron transport</keyword>
<keyword id="KW-0349">Heme</keyword>
<keyword id="KW-0408">Iron</keyword>
<keyword id="KW-0472">Membrane</keyword>
<keyword id="KW-0479">Metal-binding</keyword>
<keyword id="KW-0496">Mitochondrion</keyword>
<keyword id="KW-0999">Mitochondrion inner membrane</keyword>
<keyword id="KW-1185">Reference proteome</keyword>
<keyword id="KW-0679">Respiratory chain</keyword>
<keyword id="KW-0812">Transmembrane</keyword>
<keyword id="KW-1133">Transmembrane helix</keyword>
<keyword id="KW-0813">Transport</keyword>
<keyword id="KW-0830">Ubiquinone</keyword>
<gene>
    <name type="primary">MT-CYB</name>
    <name type="synonym">COB</name>
    <name type="synonym">CYTB</name>
    <name type="synonym">MTCYB</name>
</gene>
<evidence type="ECO:0000250" key="1"/>
<evidence type="ECO:0000250" key="2">
    <source>
        <dbReference type="UniProtKB" id="P00157"/>
    </source>
</evidence>
<evidence type="ECO:0000255" key="3">
    <source>
        <dbReference type="PROSITE-ProRule" id="PRU00967"/>
    </source>
</evidence>
<evidence type="ECO:0000255" key="4">
    <source>
        <dbReference type="PROSITE-ProRule" id="PRU00968"/>
    </source>
</evidence>
<protein>
    <recommendedName>
        <fullName>Cytochrome b</fullName>
    </recommendedName>
    <alternativeName>
        <fullName>Complex III subunit 3</fullName>
    </alternativeName>
    <alternativeName>
        <fullName>Complex III subunit III</fullName>
    </alternativeName>
    <alternativeName>
        <fullName>Cytochrome b-c1 complex subunit 3</fullName>
    </alternativeName>
    <alternativeName>
        <fullName>Ubiquinol-cytochrome-c reductase complex cytochrome b subunit</fullName>
    </alternativeName>
</protein>
<geneLocation type="mitochondrion"/>
<proteinExistence type="inferred from homology"/>
<name>CYB_DELLE</name>
<comment type="function">
    <text evidence="2">Component of the ubiquinol-cytochrome c reductase complex (complex III or cytochrome b-c1 complex) that is part of the mitochondrial respiratory chain. The b-c1 complex mediates electron transfer from ubiquinol to cytochrome c. Contributes to the generation of a proton gradient across the mitochondrial membrane that is then used for ATP synthesis.</text>
</comment>
<comment type="cofactor">
    <cofactor evidence="2">
        <name>heme b</name>
        <dbReference type="ChEBI" id="CHEBI:60344"/>
    </cofactor>
    <text evidence="2">Binds 2 heme b groups non-covalently.</text>
</comment>
<comment type="subunit">
    <text evidence="2">The cytochrome bc1 complex contains 11 subunits: 3 respiratory subunits (MT-CYB, CYC1 and UQCRFS1), 2 core proteins (UQCRC1 and UQCRC2) and 6 low-molecular weight proteins (UQCRH/QCR6, UQCRB/QCR7, UQCRQ/QCR8, UQCR10/QCR9, UQCR11/QCR10 and a cleavage product of UQCRFS1). This cytochrome bc1 complex then forms a dimer.</text>
</comment>
<comment type="subcellular location">
    <subcellularLocation>
        <location evidence="2">Mitochondrion inner membrane</location>
        <topology evidence="2">Multi-pass membrane protein</topology>
    </subcellularLocation>
</comment>
<comment type="miscellaneous">
    <text evidence="1">Heme 1 (or BL or b562) is low-potential and absorbs at about 562 nm, and heme 2 (or BH or b566) is high-potential and absorbs at about 566 nm.</text>
</comment>
<comment type="similarity">
    <text evidence="3 4">Belongs to the cytochrome b family.</text>
</comment>
<comment type="caution">
    <text evidence="2">The full-length protein contains only eight transmembrane helices, not nine as predicted by bioinformatics tools.</text>
</comment>
<dbReference type="EMBL" id="U72037">
    <property type="protein sequence ID" value="AAC31654.1"/>
    <property type="molecule type" value="Genomic_DNA"/>
</dbReference>
<dbReference type="EMBL" id="U13130">
    <property type="protein sequence ID" value="AAC48440.1"/>
    <property type="molecule type" value="Genomic_DNA"/>
</dbReference>
<dbReference type="SMR" id="O03812"/>
<dbReference type="Proteomes" id="UP000248483">
    <property type="component" value="Mitochondrion MT"/>
</dbReference>
<dbReference type="GO" id="GO:0005743">
    <property type="term" value="C:mitochondrial inner membrane"/>
    <property type="evidence" value="ECO:0007669"/>
    <property type="project" value="UniProtKB-SubCell"/>
</dbReference>
<dbReference type="GO" id="GO:0045275">
    <property type="term" value="C:respiratory chain complex III"/>
    <property type="evidence" value="ECO:0007669"/>
    <property type="project" value="Ensembl"/>
</dbReference>
<dbReference type="GO" id="GO:0046872">
    <property type="term" value="F:metal ion binding"/>
    <property type="evidence" value="ECO:0007669"/>
    <property type="project" value="UniProtKB-KW"/>
</dbReference>
<dbReference type="GO" id="GO:0008121">
    <property type="term" value="F:ubiquinol-cytochrome-c reductase activity"/>
    <property type="evidence" value="ECO:0007669"/>
    <property type="project" value="InterPro"/>
</dbReference>
<dbReference type="GO" id="GO:0006122">
    <property type="term" value="P:mitochondrial electron transport, ubiquinol to cytochrome c"/>
    <property type="evidence" value="ECO:0007669"/>
    <property type="project" value="TreeGrafter"/>
</dbReference>
<dbReference type="CDD" id="cd00290">
    <property type="entry name" value="cytochrome_b_C"/>
    <property type="match status" value="1"/>
</dbReference>
<dbReference type="CDD" id="cd00284">
    <property type="entry name" value="Cytochrome_b_N"/>
    <property type="match status" value="1"/>
</dbReference>
<dbReference type="FunFam" id="1.20.810.10:FF:000002">
    <property type="entry name" value="Cytochrome b"/>
    <property type="match status" value="1"/>
</dbReference>
<dbReference type="Gene3D" id="1.20.810.10">
    <property type="entry name" value="Cytochrome Bc1 Complex, Chain C"/>
    <property type="match status" value="1"/>
</dbReference>
<dbReference type="InterPro" id="IPR005798">
    <property type="entry name" value="Cyt_b/b6_C"/>
</dbReference>
<dbReference type="InterPro" id="IPR036150">
    <property type="entry name" value="Cyt_b/b6_C_sf"/>
</dbReference>
<dbReference type="InterPro" id="IPR005797">
    <property type="entry name" value="Cyt_b/b6_N"/>
</dbReference>
<dbReference type="InterPro" id="IPR027387">
    <property type="entry name" value="Cytb/b6-like_sf"/>
</dbReference>
<dbReference type="InterPro" id="IPR030689">
    <property type="entry name" value="Cytochrome_b"/>
</dbReference>
<dbReference type="InterPro" id="IPR048260">
    <property type="entry name" value="Cytochrome_b_C_euk/bac"/>
</dbReference>
<dbReference type="InterPro" id="IPR048259">
    <property type="entry name" value="Cytochrome_b_N_euk/bac"/>
</dbReference>
<dbReference type="InterPro" id="IPR016174">
    <property type="entry name" value="Di-haem_cyt_TM"/>
</dbReference>
<dbReference type="PANTHER" id="PTHR19271">
    <property type="entry name" value="CYTOCHROME B"/>
    <property type="match status" value="1"/>
</dbReference>
<dbReference type="PANTHER" id="PTHR19271:SF16">
    <property type="entry name" value="CYTOCHROME B"/>
    <property type="match status" value="1"/>
</dbReference>
<dbReference type="Pfam" id="PF00032">
    <property type="entry name" value="Cytochrom_B_C"/>
    <property type="match status" value="1"/>
</dbReference>
<dbReference type="Pfam" id="PF00033">
    <property type="entry name" value="Cytochrome_B"/>
    <property type="match status" value="1"/>
</dbReference>
<dbReference type="PIRSF" id="PIRSF038885">
    <property type="entry name" value="COB"/>
    <property type="match status" value="1"/>
</dbReference>
<dbReference type="SUPFAM" id="SSF81648">
    <property type="entry name" value="a domain/subunit of cytochrome bc1 complex (Ubiquinol-cytochrome c reductase)"/>
    <property type="match status" value="1"/>
</dbReference>
<dbReference type="SUPFAM" id="SSF81342">
    <property type="entry name" value="Transmembrane di-heme cytochromes"/>
    <property type="match status" value="1"/>
</dbReference>
<dbReference type="PROSITE" id="PS51003">
    <property type="entry name" value="CYTB_CTER"/>
    <property type="match status" value="1"/>
</dbReference>
<dbReference type="PROSITE" id="PS51002">
    <property type="entry name" value="CYTB_NTER"/>
    <property type="match status" value="1"/>
</dbReference>
<reference key="1">
    <citation type="journal article" date="1996" name="Genetics">
        <title>Effects of character weighting and species sampling on phylogeny reconstruction: a case study based on DNA sequence data in cetaceans.</title>
        <authorList>
            <person name="Milinkovitch M.C."/>
            <person name="LeDuc R.G."/>
            <person name="Adachi J."/>
            <person name="Farnir F."/>
            <person name="Georges M."/>
            <person name="Hasegawa M."/>
        </authorList>
    </citation>
    <scope>NUCLEOTIDE SEQUENCE [GENOMIC DNA]</scope>
</reference>
<reference key="2">
    <citation type="journal article" date="1994" name="Mol. Biol. Evol.">
        <title>Phylogeny of all major groups of cetaceans based on DNA sequences from three mitochondrial genes.</title>
        <authorList>
            <person name="Milinkovitch M.C."/>
            <person name="Meyer A."/>
            <person name="Powell J.R."/>
        </authorList>
    </citation>
    <scope>NUCLEOTIDE SEQUENCE [GENOMIC DNA] OF 1-134</scope>
</reference>
<accession>O03812</accession>
<accession>Q34330</accession>
<feature type="chain" id="PRO_0000060876" description="Cytochrome b">
    <location>
        <begin position="1"/>
        <end position="379"/>
    </location>
</feature>
<feature type="transmembrane region" description="Helical" evidence="2">
    <location>
        <begin position="33"/>
        <end position="53"/>
    </location>
</feature>
<feature type="transmembrane region" description="Helical" evidence="2">
    <location>
        <begin position="77"/>
        <end position="98"/>
    </location>
</feature>
<feature type="transmembrane region" description="Helical" evidence="2">
    <location>
        <begin position="113"/>
        <end position="133"/>
    </location>
</feature>
<feature type="transmembrane region" description="Helical" evidence="2">
    <location>
        <begin position="178"/>
        <end position="198"/>
    </location>
</feature>
<feature type="transmembrane region" description="Helical" evidence="2">
    <location>
        <begin position="226"/>
        <end position="246"/>
    </location>
</feature>
<feature type="transmembrane region" description="Helical" evidence="2">
    <location>
        <begin position="288"/>
        <end position="308"/>
    </location>
</feature>
<feature type="transmembrane region" description="Helical" evidence="2">
    <location>
        <begin position="320"/>
        <end position="340"/>
    </location>
</feature>
<feature type="transmembrane region" description="Helical" evidence="2">
    <location>
        <begin position="347"/>
        <end position="367"/>
    </location>
</feature>
<feature type="binding site" description="axial binding residue" evidence="2">
    <location>
        <position position="83"/>
    </location>
    <ligand>
        <name>heme b</name>
        <dbReference type="ChEBI" id="CHEBI:60344"/>
        <label>b562</label>
    </ligand>
    <ligandPart>
        <name>Fe</name>
        <dbReference type="ChEBI" id="CHEBI:18248"/>
    </ligandPart>
</feature>
<feature type="binding site" description="axial binding residue" evidence="2">
    <location>
        <position position="97"/>
    </location>
    <ligand>
        <name>heme b</name>
        <dbReference type="ChEBI" id="CHEBI:60344"/>
        <label>b566</label>
    </ligand>
    <ligandPart>
        <name>Fe</name>
        <dbReference type="ChEBI" id="CHEBI:18248"/>
    </ligandPart>
</feature>
<feature type="binding site" description="axial binding residue" evidence="2">
    <location>
        <position position="182"/>
    </location>
    <ligand>
        <name>heme b</name>
        <dbReference type="ChEBI" id="CHEBI:60344"/>
        <label>b562</label>
    </ligand>
    <ligandPart>
        <name>Fe</name>
        <dbReference type="ChEBI" id="CHEBI:18248"/>
    </ligandPart>
</feature>
<feature type="binding site" description="axial binding residue" evidence="2">
    <location>
        <position position="196"/>
    </location>
    <ligand>
        <name>heme b</name>
        <dbReference type="ChEBI" id="CHEBI:60344"/>
        <label>b566</label>
    </ligand>
    <ligandPart>
        <name>Fe</name>
        <dbReference type="ChEBI" id="CHEBI:18248"/>
    </ligandPart>
</feature>
<feature type="binding site" evidence="2">
    <location>
        <position position="201"/>
    </location>
    <ligand>
        <name>a ubiquinone</name>
        <dbReference type="ChEBI" id="CHEBI:16389"/>
    </ligand>
</feature>
<organism>
    <name type="scientific">Delphinapterus leucas</name>
    <name type="common">Beluga whale</name>
    <dbReference type="NCBI Taxonomy" id="9749"/>
    <lineage>
        <taxon>Eukaryota</taxon>
        <taxon>Metazoa</taxon>
        <taxon>Chordata</taxon>
        <taxon>Craniata</taxon>
        <taxon>Vertebrata</taxon>
        <taxon>Euteleostomi</taxon>
        <taxon>Mammalia</taxon>
        <taxon>Eutheria</taxon>
        <taxon>Laurasiatheria</taxon>
        <taxon>Artiodactyla</taxon>
        <taxon>Whippomorpha</taxon>
        <taxon>Cetacea</taxon>
        <taxon>Odontoceti</taxon>
        <taxon>Monodontidae</taxon>
        <taxon>Delphinapterus</taxon>
    </lineage>
</organism>
<sequence>MTNIRKTHPLMKILNNAFIDLPTPSNISSWWNFGSLLGLCLIMQILTGLFLAMHYTPDTSTAFSSVAHICRDVNYGWIIRYLHANGASMFFICLYTHIGRSLYYGSHTSQETWNIGVLLLLMVMATAFVGYVLPWGQMSFWGATVITNLLSAIPYIGNTLVEWIWGGFSVDKATLTRFFTFHFILPFIITALVAVHLLFLHETGSNNPTGIPSNMDTIPFHPYYTIKDILGALLLILTLLTVTLFTPDLLGDPDNYTPANPLNTPAHIKPEWYFLFAYTILRSIPNKLGGVLALLLSILILLFIPMLQTSKQRSMMFRPLSQLLFWTLIADFLILTWIGGQPVEHPYITVGQLASILYFLLILVLMPVASLIENKLLKW</sequence>